<gene>
    <name evidence="1" type="primary">rpmD</name>
    <name type="ordered locus">AZOSEA21750</name>
    <name type="ORF">ebC4</name>
</gene>
<dbReference type="EMBL" id="CR555306">
    <property type="protein sequence ID" value="CAI08300.1"/>
    <property type="molecule type" value="Genomic_DNA"/>
</dbReference>
<dbReference type="RefSeq" id="WP_011237990.1">
    <property type="nucleotide sequence ID" value="NC_006513.1"/>
</dbReference>
<dbReference type="SMR" id="Q5P314"/>
<dbReference type="STRING" id="76114.ebC4"/>
<dbReference type="KEGG" id="eba:ebC4"/>
<dbReference type="eggNOG" id="COG1841">
    <property type="taxonomic scope" value="Bacteria"/>
</dbReference>
<dbReference type="HOGENOM" id="CLU_131047_1_4_4"/>
<dbReference type="OrthoDB" id="9812790at2"/>
<dbReference type="Proteomes" id="UP000006552">
    <property type="component" value="Chromosome"/>
</dbReference>
<dbReference type="GO" id="GO:0022625">
    <property type="term" value="C:cytosolic large ribosomal subunit"/>
    <property type="evidence" value="ECO:0007669"/>
    <property type="project" value="TreeGrafter"/>
</dbReference>
<dbReference type="GO" id="GO:0003735">
    <property type="term" value="F:structural constituent of ribosome"/>
    <property type="evidence" value="ECO:0007669"/>
    <property type="project" value="InterPro"/>
</dbReference>
<dbReference type="GO" id="GO:0006412">
    <property type="term" value="P:translation"/>
    <property type="evidence" value="ECO:0007669"/>
    <property type="project" value="UniProtKB-UniRule"/>
</dbReference>
<dbReference type="CDD" id="cd01658">
    <property type="entry name" value="Ribosomal_L30"/>
    <property type="match status" value="1"/>
</dbReference>
<dbReference type="FunFam" id="3.30.1390.20:FF:000001">
    <property type="entry name" value="50S ribosomal protein L30"/>
    <property type="match status" value="1"/>
</dbReference>
<dbReference type="Gene3D" id="3.30.1390.20">
    <property type="entry name" value="Ribosomal protein L30, ferredoxin-like fold domain"/>
    <property type="match status" value="1"/>
</dbReference>
<dbReference type="HAMAP" id="MF_01371_B">
    <property type="entry name" value="Ribosomal_uL30_B"/>
    <property type="match status" value="1"/>
</dbReference>
<dbReference type="InterPro" id="IPR036919">
    <property type="entry name" value="Ribo_uL30_ferredoxin-like_sf"/>
</dbReference>
<dbReference type="InterPro" id="IPR005996">
    <property type="entry name" value="Ribosomal_uL30_bac-type"/>
</dbReference>
<dbReference type="InterPro" id="IPR016082">
    <property type="entry name" value="Ribosomal_uL30_ferredoxin-like"/>
</dbReference>
<dbReference type="NCBIfam" id="TIGR01308">
    <property type="entry name" value="rpmD_bact"/>
    <property type="match status" value="1"/>
</dbReference>
<dbReference type="PANTHER" id="PTHR15892:SF2">
    <property type="entry name" value="LARGE RIBOSOMAL SUBUNIT PROTEIN UL30M"/>
    <property type="match status" value="1"/>
</dbReference>
<dbReference type="PANTHER" id="PTHR15892">
    <property type="entry name" value="MITOCHONDRIAL RIBOSOMAL PROTEIN L30"/>
    <property type="match status" value="1"/>
</dbReference>
<dbReference type="Pfam" id="PF00327">
    <property type="entry name" value="Ribosomal_L30"/>
    <property type="match status" value="1"/>
</dbReference>
<dbReference type="PIRSF" id="PIRSF002211">
    <property type="entry name" value="Ribosomal_L30_bac-type"/>
    <property type="match status" value="1"/>
</dbReference>
<dbReference type="SUPFAM" id="SSF55129">
    <property type="entry name" value="Ribosomal protein L30p/L7e"/>
    <property type="match status" value="1"/>
</dbReference>
<accession>Q5P314</accession>
<evidence type="ECO:0000255" key="1">
    <source>
        <dbReference type="HAMAP-Rule" id="MF_01371"/>
    </source>
</evidence>
<evidence type="ECO:0000305" key="2"/>
<comment type="subunit">
    <text evidence="1">Part of the 50S ribosomal subunit.</text>
</comment>
<comment type="similarity">
    <text evidence="1">Belongs to the universal ribosomal protein uL30 family.</text>
</comment>
<proteinExistence type="inferred from homology"/>
<sequence length="60" mass="6711">MSEKTIKVTLVKSVIGTKQSHRATVRGLGLRRTNHCVELQDTPEIRGMVNKVSYLLKCEG</sequence>
<keyword id="KW-1185">Reference proteome</keyword>
<keyword id="KW-0687">Ribonucleoprotein</keyword>
<keyword id="KW-0689">Ribosomal protein</keyword>
<organism>
    <name type="scientific">Aromatoleum aromaticum (strain DSM 19018 / LMG 30748 / EbN1)</name>
    <name type="common">Azoarcus sp. (strain EbN1)</name>
    <dbReference type="NCBI Taxonomy" id="76114"/>
    <lineage>
        <taxon>Bacteria</taxon>
        <taxon>Pseudomonadati</taxon>
        <taxon>Pseudomonadota</taxon>
        <taxon>Betaproteobacteria</taxon>
        <taxon>Rhodocyclales</taxon>
        <taxon>Rhodocyclaceae</taxon>
        <taxon>Aromatoleum</taxon>
    </lineage>
</organism>
<feature type="chain" id="PRO_0000273739" description="Large ribosomal subunit protein uL30">
    <location>
        <begin position="1"/>
        <end position="60"/>
    </location>
</feature>
<protein>
    <recommendedName>
        <fullName evidence="1">Large ribosomal subunit protein uL30</fullName>
    </recommendedName>
    <alternativeName>
        <fullName evidence="2">50S ribosomal protein L30</fullName>
    </alternativeName>
</protein>
<reference key="1">
    <citation type="journal article" date="2005" name="Arch. Microbiol.">
        <title>The genome sequence of an anaerobic aromatic-degrading denitrifying bacterium, strain EbN1.</title>
        <authorList>
            <person name="Rabus R."/>
            <person name="Kube M."/>
            <person name="Heider J."/>
            <person name="Beck A."/>
            <person name="Heitmann K."/>
            <person name="Widdel F."/>
            <person name="Reinhardt R."/>
        </authorList>
    </citation>
    <scope>NUCLEOTIDE SEQUENCE [LARGE SCALE GENOMIC DNA]</scope>
    <source>
        <strain>DSM 19018 / LMG 30748 / EbN1</strain>
    </source>
</reference>
<name>RL30_AROAE</name>